<proteinExistence type="evidence at protein level"/>
<keyword id="KW-0025">Alternative splicing</keyword>
<keyword id="KW-0175">Coiled coil</keyword>
<keyword id="KW-0539">Nucleus</keyword>
<keyword id="KW-0597">Phosphoprotein</keyword>
<keyword id="KW-1267">Proteomics identification</keyword>
<keyword id="KW-1185">Reference proteome</keyword>
<feature type="chain" id="PRO_0000070259" description="Protein DGCR6">
    <location>
        <begin position="1"/>
        <end position="220"/>
    </location>
</feature>
<feature type="coiled-coil region" evidence="1">
    <location>
        <begin position="76"/>
        <end position="142"/>
    </location>
</feature>
<feature type="splice variant" id="VSP_055898" description="In isoform 2." evidence="4">
    <original>LRQALRQKHQEAQQACRPHNLPVLQAAQQRELEAVEHRIREEQRAMDQKIVLELDRKVADQQSTLEKAGVA</original>
    <variation>PRTFWNPLETCRDSGVGGWRRLASSPVQTPLWPGCSAGLCSGRRCGRSTRKPSRPAGPITCLCFRRLSSEN</variation>
    <location>
        <begin position="92"/>
        <end position="162"/>
    </location>
</feature>
<feature type="splice variant" id="VSP_055899" description="In isoform 2." evidence="4">
    <location>
        <begin position="163"/>
        <end position="220"/>
    </location>
</feature>
<feature type="sequence variant" id="VAR_033866" description="In dbSNP:rs16983281.">
    <original>A</original>
    <variation>V</variation>
    <location>
        <position position="117"/>
    </location>
</feature>
<feature type="sequence conflict" description="In Ref. 3." evidence="5" ref="3">
    <original>MERYAGALEEVA</original>
    <variation>PKGAKAGYQPRG</variation>
    <location>
        <begin position="1"/>
        <end position="12"/>
    </location>
</feature>
<sequence length="220" mass="24989">MERYAGALEEVADGARQQERHYQLLSALQSLVKELPSSFQQRLSYTTLSDLALALLDGTVFEIVQGLLEIQHLTEKSLYNQRLRLQNEHRVLRQALRQKHQEAQQACRPHNLPVLQAAQQRELEAVEHRIREEQRAMDQKIVLELDRKVADQQSTLEKAGVAGFYVTTNPQELMLQMNLLELIRKLQQRGCWAGKAALGLGGPWQLPAAQCDQKGSPVPP</sequence>
<accession>Q14129</accession>
<accession>B2RCH5</accession>
<accession>D3DX15</accession>
<accession>G5E9J8</accession>
<accession>Q9BY28</accession>
<organism>
    <name type="scientific">Homo sapiens</name>
    <name type="common">Human</name>
    <dbReference type="NCBI Taxonomy" id="9606"/>
    <lineage>
        <taxon>Eukaryota</taxon>
        <taxon>Metazoa</taxon>
        <taxon>Chordata</taxon>
        <taxon>Craniata</taxon>
        <taxon>Vertebrata</taxon>
        <taxon>Euteleostomi</taxon>
        <taxon>Mammalia</taxon>
        <taxon>Eutheria</taxon>
        <taxon>Euarchontoglires</taxon>
        <taxon>Primates</taxon>
        <taxon>Haplorrhini</taxon>
        <taxon>Catarrhini</taxon>
        <taxon>Hominidae</taxon>
        <taxon>Homo</taxon>
    </lineage>
</organism>
<gene>
    <name type="primary">DGCR6</name>
</gene>
<evidence type="ECO:0000255" key="1"/>
<evidence type="ECO:0000269" key="2">
    <source>
    </source>
</evidence>
<evidence type="ECO:0000269" key="3">
    <source>
    </source>
</evidence>
<evidence type="ECO:0000303" key="4">
    <source>
    </source>
</evidence>
<evidence type="ECO:0000305" key="5"/>
<dbReference type="EMBL" id="AF228707">
    <property type="protein sequence ID" value="AAK15584.1"/>
    <property type="molecule type" value="mRNA"/>
</dbReference>
<dbReference type="EMBL" id="X96484">
    <property type="protein sequence ID" value="CAA65339.1"/>
    <property type="status" value="ALT_FRAME"/>
    <property type="molecule type" value="mRNA"/>
</dbReference>
<dbReference type="EMBL" id="KJ535003">
    <property type="protein sequence ID" value="AHW56642.1"/>
    <property type="molecule type" value="mRNA"/>
</dbReference>
<dbReference type="EMBL" id="CR456434">
    <property type="protein sequence ID" value="CAG30320.1"/>
    <property type="molecule type" value="mRNA"/>
</dbReference>
<dbReference type="EMBL" id="AK315115">
    <property type="protein sequence ID" value="BAG37572.1"/>
    <property type="molecule type" value="mRNA"/>
</dbReference>
<dbReference type="EMBL" id="AC007326">
    <property type="status" value="NOT_ANNOTATED_CDS"/>
    <property type="molecule type" value="Genomic_DNA"/>
</dbReference>
<dbReference type="EMBL" id="CH471176">
    <property type="protein sequence ID" value="EAX03075.1"/>
    <property type="molecule type" value="Genomic_DNA"/>
</dbReference>
<dbReference type="EMBL" id="CH471176">
    <property type="protein sequence ID" value="EAX03077.1"/>
    <property type="molecule type" value="Genomic_DNA"/>
</dbReference>
<dbReference type="EMBL" id="BC047039">
    <property type="protein sequence ID" value="AAH47039.1"/>
    <property type="molecule type" value="mRNA"/>
</dbReference>
<dbReference type="CCDS" id="CCDS13753.1">
    <molecule id="Q14129-1"/>
</dbReference>
<dbReference type="RefSeq" id="NP_005666.2">
    <molecule id="Q14129-1"/>
    <property type="nucleotide sequence ID" value="NM_005675.4"/>
</dbReference>
<dbReference type="RefSeq" id="XP_006724997.1">
    <property type="nucleotide sequence ID" value="XM_006724934.1"/>
</dbReference>
<dbReference type="RefSeq" id="XP_047297465.1">
    <molecule id="Q14129-2"/>
    <property type="nucleotide sequence ID" value="XM_047441509.1"/>
</dbReference>
<dbReference type="RefSeq" id="XP_054181927.1">
    <molecule id="Q14129-2"/>
    <property type="nucleotide sequence ID" value="XM_054325952.1"/>
</dbReference>
<dbReference type="SMR" id="Q14129"/>
<dbReference type="BioGRID" id="113850">
    <property type="interactions" value="72"/>
</dbReference>
<dbReference type="FunCoup" id="Q14129">
    <property type="interactions" value="17"/>
</dbReference>
<dbReference type="IntAct" id="Q14129">
    <property type="interactions" value="22"/>
</dbReference>
<dbReference type="STRING" id="9606.ENSP00000331681"/>
<dbReference type="GlyGen" id="Q14129">
    <property type="glycosylation" value="1 site, 1 O-linked glycan (1 site)"/>
</dbReference>
<dbReference type="iPTMnet" id="Q14129"/>
<dbReference type="PhosphoSitePlus" id="Q14129"/>
<dbReference type="BioMuta" id="DGCR6"/>
<dbReference type="DMDM" id="22002047"/>
<dbReference type="jPOST" id="Q14129"/>
<dbReference type="MassIVE" id="Q14129"/>
<dbReference type="PaxDb" id="9606-ENSP00000331681"/>
<dbReference type="PeptideAtlas" id="Q14129"/>
<dbReference type="ProteomicsDB" id="33959"/>
<dbReference type="ProteomicsDB" id="59830">
    <molecule id="Q14129-1"/>
</dbReference>
<dbReference type="Pumba" id="Q14129"/>
<dbReference type="Antibodypedia" id="22788">
    <property type="antibodies" value="88 antibodies from 15 providers"/>
</dbReference>
<dbReference type="DNASU" id="8214"/>
<dbReference type="Ensembl" id="ENST00000331444.12">
    <molecule id="Q14129-1"/>
    <property type="protein sequence ID" value="ENSP00000331681.6"/>
    <property type="gene ID" value="ENSG00000183628.14"/>
</dbReference>
<dbReference type="Ensembl" id="ENST00000427407.5">
    <molecule id="Q14129-2"/>
    <property type="protein sequence ID" value="ENSP00000397633.2"/>
    <property type="gene ID" value="ENSG00000183628.14"/>
</dbReference>
<dbReference type="GeneID" id="8214"/>
<dbReference type="KEGG" id="hsa:8214"/>
<dbReference type="MANE-Select" id="ENST00000331444.12">
    <property type="protein sequence ID" value="ENSP00000331681.6"/>
    <property type="RefSeq nucleotide sequence ID" value="NM_005675.6"/>
    <property type="RefSeq protein sequence ID" value="NP_005666.2"/>
</dbReference>
<dbReference type="UCSC" id="uc062bjm.1">
    <molecule id="Q14129-1"/>
    <property type="organism name" value="human"/>
</dbReference>
<dbReference type="AGR" id="HGNC:2846"/>
<dbReference type="CTD" id="8214"/>
<dbReference type="DisGeNET" id="8214"/>
<dbReference type="GeneCards" id="DGCR6"/>
<dbReference type="GeneReviews" id="DGCR6"/>
<dbReference type="HGNC" id="HGNC:2846">
    <property type="gene designation" value="DGCR6"/>
</dbReference>
<dbReference type="HPA" id="ENSG00000183628">
    <property type="expression patterns" value="Tissue enhanced (skeletal)"/>
</dbReference>
<dbReference type="MalaCards" id="DGCR6"/>
<dbReference type="MIM" id="601279">
    <property type="type" value="gene"/>
</dbReference>
<dbReference type="neXtProt" id="NX_Q14129"/>
<dbReference type="OpenTargets" id="ENSG00000183628"/>
<dbReference type="PharmGKB" id="PA27308"/>
<dbReference type="VEuPathDB" id="HostDB:ENSG00000183628"/>
<dbReference type="eggNOG" id="KOG4810">
    <property type="taxonomic scope" value="Eukaryota"/>
</dbReference>
<dbReference type="GeneTree" id="ENSGT00390000017663"/>
<dbReference type="HOGENOM" id="CLU_096921_1_1_1"/>
<dbReference type="InParanoid" id="Q14129"/>
<dbReference type="OMA" id="MERYAGP"/>
<dbReference type="OrthoDB" id="9532930at2759"/>
<dbReference type="PAN-GO" id="Q14129">
    <property type="GO annotations" value="0 GO annotations based on evolutionary models"/>
</dbReference>
<dbReference type="PhylomeDB" id="Q14129"/>
<dbReference type="TreeFam" id="TF324608"/>
<dbReference type="PathwayCommons" id="Q14129"/>
<dbReference type="SignaLink" id="Q14129"/>
<dbReference type="BioGRID-ORCS" id="102724770">
    <property type="hits" value="0 hits in 7 CRISPR screens"/>
</dbReference>
<dbReference type="BioGRID-ORCS" id="8214">
    <property type="hits" value="41 hits in 1060 CRISPR screens"/>
</dbReference>
<dbReference type="ChiTaRS" id="DGCR6">
    <property type="organism name" value="human"/>
</dbReference>
<dbReference type="GeneWiki" id="DGCR6"/>
<dbReference type="Pharos" id="Q14129">
    <property type="development level" value="Tbio"/>
</dbReference>
<dbReference type="PRO" id="PR:Q14129"/>
<dbReference type="Proteomes" id="UP000005640">
    <property type="component" value="Chromosome 22"/>
</dbReference>
<dbReference type="RNAct" id="Q14129">
    <property type="molecule type" value="protein"/>
</dbReference>
<dbReference type="Bgee" id="ENSG00000183628">
    <property type="expression patterns" value="Expressed in skeletal muscle tissue and 99 other cell types or tissues"/>
</dbReference>
<dbReference type="ExpressionAtlas" id="Q14129">
    <property type="expression patterns" value="baseline and differential"/>
</dbReference>
<dbReference type="GO" id="GO:0031012">
    <property type="term" value="C:extracellular matrix"/>
    <property type="evidence" value="ECO:0000304"/>
    <property type="project" value="ProtInc"/>
</dbReference>
<dbReference type="GO" id="GO:0005634">
    <property type="term" value="C:nucleus"/>
    <property type="evidence" value="ECO:0007669"/>
    <property type="project" value="UniProtKB-SubCell"/>
</dbReference>
<dbReference type="GO" id="GO:0009887">
    <property type="term" value="P:animal organ morphogenesis"/>
    <property type="evidence" value="ECO:0000304"/>
    <property type="project" value="ProtInc"/>
</dbReference>
<dbReference type="GO" id="GO:0007155">
    <property type="term" value="P:cell adhesion"/>
    <property type="evidence" value="ECO:0000304"/>
    <property type="project" value="ProtInc"/>
</dbReference>
<dbReference type="InterPro" id="IPR010849">
    <property type="entry name" value="Gonadal"/>
</dbReference>
<dbReference type="PANTHER" id="PTHR13054">
    <property type="entry name" value="DIGEORGE SYNDROME CRITICAL REGION 6 DGCR6 FAMILY MEMBER"/>
    <property type="match status" value="1"/>
</dbReference>
<dbReference type="PANTHER" id="PTHR13054:SF7">
    <property type="entry name" value="PROTEIN DGCR6"/>
    <property type="match status" value="1"/>
</dbReference>
<dbReference type="Pfam" id="PF07324">
    <property type="entry name" value="DGCR6"/>
    <property type="match status" value="1"/>
</dbReference>
<protein>
    <recommendedName>
        <fullName>Protein DGCR6</fullName>
    </recommendedName>
    <alternativeName>
        <fullName>DiGeorge syndrome critical region 6</fullName>
    </alternativeName>
</protein>
<name>DGCR6_HUMAN</name>
<comment type="function">
    <text>May play a role in neural crest cell migration into the third and fourth pharyngeal pouches.</text>
</comment>
<comment type="interaction">
    <interactant intactId="EBI-12206931">
        <id>Q14129</id>
    </interactant>
    <interactant intactId="EBI-357530">
        <id>Q9ULX6</id>
        <label>AKAP8L</label>
    </interactant>
    <organismsDiffer>false</organismsDiffer>
    <experiments>3</experiments>
</comment>
<comment type="interaction">
    <interactant intactId="EBI-12206931">
        <id>Q14129</id>
    </interactant>
    <interactant intactId="EBI-3928124">
        <id>Q96DF8</id>
        <label>ESS2</label>
    </interactant>
    <organismsDiffer>false</organismsDiffer>
    <experiments>3</experiments>
</comment>
<comment type="interaction">
    <interactant intactId="EBI-12206931">
        <id>Q14129</id>
    </interactant>
    <interactant intactId="EBI-1050358">
        <id>P07954</id>
        <label>FH</label>
    </interactant>
    <organismsDiffer>false</organismsDiffer>
    <experiments>3</experiments>
</comment>
<comment type="interaction">
    <interactant intactId="EBI-12206931">
        <id>Q14129</id>
    </interactant>
    <interactant intactId="EBI-2881520">
        <id>Q9NRY2</id>
        <label>INIP</label>
    </interactant>
    <organismsDiffer>false</organismsDiffer>
    <experiments>5</experiments>
</comment>
<comment type="interaction">
    <interactant intactId="EBI-12206931">
        <id>Q14129</id>
    </interactant>
    <interactant intactId="EBI-10176379">
        <id>P59991</id>
        <label>KRTAP12-2</label>
    </interactant>
    <organismsDiffer>false</organismsDiffer>
    <experiments>3</experiments>
</comment>
<comment type="subcellular location">
    <subcellularLocation>
        <location evidence="3">Nucleus</location>
    </subcellularLocation>
    <text>Predominantly nuclear.</text>
</comment>
<comment type="alternative products">
    <event type="alternative splicing"/>
    <isoform>
        <id>Q14129-1</id>
        <name>1</name>
        <sequence type="displayed"/>
    </isoform>
    <isoform>
        <id>Q14129-2</id>
        <name>2</name>
        <name>C</name>
        <sequence type="described" ref="VSP_055898 VSP_055899"/>
    </isoform>
</comment>
<comment type="tissue specificity">
    <text evidence="2 3">Found in all tissues examined with highest expression in liver, heart and skeletal muscle. Lower levels in pancreas and placenta. Weak expression in brain.</text>
</comment>
<comment type="induction">
    <text>Increased levels in several tumor cell lines, including lung and colon adenocarcinomas and mammary carcinomas. Strongly induced in Burkitt's lymphoma and lymphocytes transformed by EBV.</text>
</comment>
<comment type="similarity">
    <text evidence="5">Belongs to the gonadal family.</text>
</comment>
<comment type="sequence caution" evidence="5">
    <conflict type="frameshift">
        <sequence resource="EMBL-CDS" id="CAA65339"/>
    </conflict>
</comment>
<reference key="1">
    <citation type="journal article" date="2001" name="Genome Res.">
        <title>Two functional copies of the DGCR6 gene are present on human chromosome 22q11 due to a duplication of an ancestral locus.</title>
        <authorList>
            <person name="Edelmann L."/>
            <person name="Stankiewicz P."/>
            <person name="Spiteri E."/>
            <person name="Pandita R.K."/>
            <person name="Shaffer L."/>
            <person name="Lupski J."/>
            <person name="Morrow B.E."/>
        </authorList>
    </citation>
    <scope>NUCLEOTIDE SEQUENCE [GENOMIC DNA / MRNA] (ISOFORM 1)</scope>
    <scope>TISSUE SPECIFICITY</scope>
    <source>
        <tissue>Fetal spleen</tissue>
    </source>
</reference>
<reference key="2">
    <citation type="journal article" date="2005" name="Hum. Genet.">
        <title>Biochemical characterisation of the proteins encoded by the DiGeorge critical region 6 (DGCR6) genes.</title>
        <authorList>
            <person name="Pfuhl T."/>
            <person name="Duerr M."/>
            <person name="Spurk A."/>
            <person name="Schwalbert B."/>
            <person name="Nord R."/>
            <person name="Mysliwietz J."/>
            <person name="Kremmer E."/>
            <person name="Graesser F.A."/>
        </authorList>
    </citation>
    <scope>NUCLEOTIDE SEQUENCE [MRNA] (ISOFORM 1)</scope>
    <scope>TISSUE SPECIFICITY</scope>
    <scope>SUBCELLULAR LOCATION</scope>
    <scope>PHOSPHORYLATION</scope>
    <source>
        <tissue>Fetal brain</tissue>
    </source>
</reference>
<reference key="3">
    <citation type="journal article" date="1996" name="Hum. Mol. Genet.">
        <title>Isolation of a novel gene from the DiGeorge syndrome critical region with homology to Drosophila gdl and to human LAMC1 genes.</title>
        <authorList>
            <person name="Demczuk S."/>
            <person name="Thomas G."/>
            <person name="Aurias A."/>
        </authorList>
    </citation>
    <scope>NUCLEOTIDE SEQUENCE [MRNA] (ISOFORM 1)</scope>
</reference>
<reference key="4">
    <citation type="journal article" date="2014" name="Nat. Commun.">
        <title>Protein interaction network of alternatively spliced isoforms from brain links genetic risk factors for autism.</title>
        <authorList>
            <person name="Corominas R."/>
            <person name="Yang X."/>
            <person name="Lin G.N."/>
            <person name="Kang S."/>
            <person name="Shen Y."/>
            <person name="Ghamsari L."/>
            <person name="Broly M."/>
            <person name="Rodriguez M."/>
            <person name="Tam S."/>
            <person name="Wanamaker S.A."/>
            <person name="Fan C."/>
            <person name="Yi S."/>
            <person name="Tasan M."/>
            <person name="Lemmens I."/>
            <person name="Kuang X."/>
            <person name="Zhao N."/>
            <person name="Malhotra D."/>
            <person name="Michaelson J.J."/>
            <person name="Vacic V."/>
            <person name="Calderwood M.A."/>
            <person name="Roth F.P."/>
            <person name="Tavernier J."/>
            <person name="Horvath S."/>
            <person name="Salehi-Ashtiani K."/>
            <person name="Korkin D."/>
            <person name="Sebat J."/>
            <person name="Hill D.E."/>
            <person name="Hao T."/>
            <person name="Vidal M."/>
            <person name="Iakoucheva L.M."/>
        </authorList>
    </citation>
    <scope>NUCLEOTIDE SEQUENCE [MRNA] (ISOFORM 2)</scope>
    <source>
        <tissue>Fetal brain</tissue>
    </source>
</reference>
<reference key="5">
    <citation type="journal article" date="2004" name="Genome Biol.">
        <title>A genome annotation-driven approach to cloning the human ORFeome.</title>
        <authorList>
            <person name="Collins J.E."/>
            <person name="Wright C.L."/>
            <person name="Edwards C.A."/>
            <person name="Davis M.P."/>
            <person name="Grinham J.A."/>
            <person name="Cole C.G."/>
            <person name="Goward M.E."/>
            <person name="Aguado B."/>
            <person name="Mallya M."/>
            <person name="Mokrab Y."/>
            <person name="Huckle E.J."/>
            <person name="Beare D.M."/>
            <person name="Dunham I."/>
        </authorList>
    </citation>
    <scope>NUCLEOTIDE SEQUENCE [LARGE SCALE MRNA] (ISOFORM 1)</scope>
</reference>
<reference key="6">
    <citation type="journal article" date="2004" name="Nat. Genet.">
        <title>Complete sequencing and characterization of 21,243 full-length human cDNAs.</title>
        <authorList>
            <person name="Ota T."/>
            <person name="Suzuki Y."/>
            <person name="Nishikawa T."/>
            <person name="Otsuki T."/>
            <person name="Sugiyama T."/>
            <person name="Irie R."/>
            <person name="Wakamatsu A."/>
            <person name="Hayashi K."/>
            <person name="Sato H."/>
            <person name="Nagai K."/>
            <person name="Kimura K."/>
            <person name="Makita H."/>
            <person name="Sekine M."/>
            <person name="Obayashi M."/>
            <person name="Nishi T."/>
            <person name="Shibahara T."/>
            <person name="Tanaka T."/>
            <person name="Ishii S."/>
            <person name="Yamamoto J."/>
            <person name="Saito K."/>
            <person name="Kawai Y."/>
            <person name="Isono Y."/>
            <person name="Nakamura Y."/>
            <person name="Nagahari K."/>
            <person name="Murakami K."/>
            <person name="Yasuda T."/>
            <person name="Iwayanagi T."/>
            <person name="Wagatsuma M."/>
            <person name="Shiratori A."/>
            <person name="Sudo H."/>
            <person name="Hosoiri T."/>
            <person name="Kaku Y."/>
            <person name="Kodaira H."/>
            <person name="Kondo H."/>
            <person name="Sugawara M."/>
            <person name="Takahashi M."/>
            <person name="Kanda K."/>
            <person name="Yokoi T."/>
            <person name="Furuya T."/>
            <person name="Kikkawa E."/>
            <person name="Omura Y."/>
            <person name="Abe K."/>
            <person name="Kamihara K."/>
            <person name="Katsuta N."/>
            <person name="Sato K."/>
            <person name="Tanikawa M."/>
            <person name="Yamazaki M."/>
            <person name="Ninomiya K."/>
            <person name="Ishibashi T."/>
            <person name="Yamashita H."/>
            <person name="Murakawa K."/>
            <person name="Fujimori K."/>
            <person name="Tanai H."/>
            <person name="Kimata M."/>
            <person name="Watanabe M."/>
            <person name="Hiraoka S."/>
            <person name="Chiba Y."/>
            <person name="Ishida S."/>
            <person name="Ono Y."/>
            <person name="Takiguchi S."/>
            <person name="Watanabe S."/>
            <person name="Yosida M."/>
            <person name="Hotuta T."/>
            <person name="Kusano J."/>
            <person name="Kanehori K."/>
            <person name="Takahashi-Fujii A."/>
            <person name="Hara H."/>
            <person name="Tanase T.-O."/>
            <person name="Nomura Y."/>
            <person name="Togiya S."/>
            <person name="Komai F."/>
            <person name="Hara R."/>
            <person name="Takeuchi K."/>
            <person name="Arita M."/>
            <person name="Imose N."/>
            <person name="Musashino K."/>
            <person name="Yuuki H."/>
            <person name="Oshima A."/>
            <person name="Sasaki N."/>
            <person name="Aotsuka S."/>
            <person name="Yoshikawa Y."/>
            <person name="Matsunawa H."/>
            <person name="Ichihara T."/>
            <person name="Shiohata N."/>
            <person name="Sano S."/>
            <person name="Moriya S."/>
            <person name="Momiyama H."/>
            <person name="Satoh N."/>
            <person name="Takami S."/>
            <person name="Terashima Y."/>
            <person name="Suzuki O."/>
            <person name="Nakagawa S."/>
            <person name="Senoh A."/>
            <person name="Mizoguchi H."/>
            <person name="Goto Y."/>
            <person name="Shimizu F."/>
            <person name="Wakebe H."/>
            <person name="Hishigaki H."/>
            <person name="Watanabe T."/>
            <person name="Sugiyama A."/>
            <person name="Takemoto M."/>
            <person name="Kawakami B."/>
            <person name="Yamazaki M."/>
            <person name="Watanabe K."/>
            <person name="Kumagai A."/>
            <person name="Itakura S."/>
            <person name="Fukuzumi Y."/>
            <person name="Fujimori Y."/>
            <person name="Komiyama M."/>
            <person name="Tashiro H."/>
            <person name="Tanigami A."/>
            <person name="Fujiwara T."/>
            <person name="Ono T."/>
            <person name="Yamada K."/>
            <person name="Fujii Y."/>
            <person name="Ozaki K."/>
            <person name="Hirao M."/>
            <person name="Ohmori Y."/>
            <person name="Kawabata A."/>
            <person name="Hikiji T."/>
            <person name="Kobatake N."/>
            <person name="Inagaki H."/>
            <person name="Ikema Y."/>
            <person name="Okamoto S."/>
            <person name="Okitani R."/>
            <person name="Kawakami T."/>
            <person name="Noguchi S."/>
            <person name="Itoh T."/>
            <person name="Shigeta K."/>
            <person name="Senba T."/>
            <person name="Matsumura K."/>
            <person name="Nakajima Y."/>
            <person name="Mizuno T."/>
            <person name="Morinaga M."/>
            <person name="Sasaki M."/>
            <person name="Togashi T."/>
            <person name="Oyama M."/>
            <person name="Hata H."/>
            <person name="Watanabe M."/>
            <person name="Komatsu T."/>
            <person name="Mizushima-Sugano J."/>
            <person name="Satoh T."/>
            <person name="Shirai Y."/>
            <person name="Takahashi Y."/>
            <person name="Nakagawa K."/>
            <person name="Okumura K."/>
            <person name="Nagase T."/>
            <person name="Nomura N."/>
            <person name="Kikuchi H."/>
            <person name="Masuho Y."/>
            <person name="Yamashita R."/>
            <person name="Nakai K."/>
            <person name="Yada T."/>
            <person name="Nakamura Y."/>
            <person name="Ohara O."/>
            <person name="Isogai T."/>
            <person name="Sugano S."/>
        </authorList>
    </citation>
    <scope>NUCLEOTIDE SEQUENCE [LARGE SCALE MRNA] (ISOFORM 1)</scope>
</reference>
<reference key="7">
    <citation type="journal article" date="1999" name="Nature">
        <title>The DNA sequence of human chromosome 22.</title>
        <authorList>
            <person name="Dunham I."/>
            <person name="Hunt A.R."/>
            <person name="Collins J.E."/>
            <person name="Bruskiewich R."/>
            <person name="Beare D.M."/>
            <person name="Clamp M."/>
            <person name="Smink L.J."/>
            <person name="Ainscough R."/>
            <person name="Almeida J.P."/>
            <person name="Babbage A.K."/>
            <person name="Bagguley C."/>
            <person name="Bailey J."/>
            <person name="Barlow K.F."/>
            <person name="Bates K.N."/>
            <person name="Beasley O.P."/>
            <person name="Bird C.P."/>
            <person name="Blakey S.E."/>
            <person name="Bridgeman A.M."/>
            <person name="Buck D."/>
            <person name="Burgess J."/>
            <person name="Burrill W.D."/>
            <person name="Burton J."/>
            <person name="Carder C."/>
            <person name="Carter N.P."/>
            <person name="Chen Y."/>
            <person name="Clark G."/>
            <person name="Clegg S.M."/>
            <person name="Cobley V.E."/>
            <person name="Cole C.G."/>
            <person name="Collier R.E."/>
            <person name="Connor R."/>
            <person name="Conroy D."/>
            <person name="Corby N.R."/>
            <person name="Coville G.J."/>
            <person name="Cox A.V."/>
            <person name="Davis J."/>
            <person name="Dawson E."/>
            <person name="Dhami P.D."/>
            <person name="Dockree C."/>
            <person name="Dodsworth S.J."/>
            <person name="Durbin R.M."/>
            <person name="Ellington A.G."/>
            <person name="Evans K.L."/>
            <person name="Fey J.M."/>
            <person name="Fleming K."/>
            <person name="French L."/>
            <person name="Garner A.A."/>
            <person name="Gilbert J.G.R."/>
            <person name="Goward M.E."/>
            <person name="Grafham D.V."/>
            <person name="Griffiths M.N.D."/>
            <person name="Hall C."/>
            <person name="Hall R.E."/>
            <person name="Hall-Tamlyn G."/>
            <person name="Heathcott R.W."/>
            <person name="Ho S."/>
            <person name="Holmes S."/>
            <person name="Hunt S.E."/>
            <person name="Jones M.C."/>
            <person name="Kershaw J."/>
            <person name="Kimberley A.M."/>
            <person name="King A."/>
            <person name="Laird G.K."/>
            <person name="Langford C.F."/>
            <person name="Leversha M.A."/>
            <person name="Lloyd C."/>
            <person name="Lloyd D.M."/>
            <person name="Martyn I.D."/>
            <person name="Mashreghi-Mohammadi M."/>
            <person name="Matthews L.H."/>
            <person name="Mccann O.T."/>
            <person name="Mcclay J."/>
            <person name="Mclaren S."/>
            <person name="McMurray A.A."/>
            <person name="Milne S.A."/>
            <person name="Mortimore B.J."/>
            <person name="Odell C.N."/>
            <person name="Pavitt R."/>
            <person name="Pearce A.V."/>
            <person name="Pearson D."/>
            <person name="Phillimore B.J.C.T."/>
            <person name="Phillips S.H."/>
            <person name="Plumb R.W."/>
            <person name="Ramsay H."/>
            <person name="Ramsey Y."/>
            <person name="Rogers L."/>
            <person name="Ross M.T."/>
            <person name="Scott C.E."/>
            <person name="Sehra H.K."/>
            <person name="Skuce C.D."/>
            <person name="Smalley S."/>
            <person name="Smith M.L."/>
            <person name="Soderlund C."/>
            <person name="Spragon L."/>
            <person name="Steward C.A."/>
            <person name="Sulston J.E."/>
            <person name="Swann R.M."/>
            <person name="Vaudin M."/>
            <person name="Wall M."/>
            <person name="Wallis J.M."/>
            <person name="Whiteley M.N."/>
            <person name="Willey D.L."/>
            <person name="Williams L."/>
            <person name="Williams S.A."/>
            <person name="Williamson H."/>
            <person name="Wilmer T.E."/>
            <person name="Wilming L."/>
            <person name="Wright C.L."/>
            <person name="Hubbard T."/>
            <person name="Bentley D.R."/>
            <person name="Beck S."/>
            <person name="Rogers J."/>
            <person name="Shimizu N."/>
            <person name="Minoshima S."/>
            <person name="Kawasaki K."/>
            <person name="Sasaki T."/>
            <person name="Asakawa S."/>
            <person name="Kudoh J."/>
            <person name="Shintani A."/>
            <person name="Shibuya K."/>
            <person name="Yoshizaki Y."/>
            <person name="Aoki N."/>
            <person name="Mitsuyama S."/>
            <person name="Roe B.A."/>
            <person name="Chen F."/>
            <person name="Chu L."/>
            <person name="Crabtree J."/>
            <person name="Deschamps S."/>
            <person name="Do A."/>
            <person name="Do T."/>
            <person name="Dorman A."/>
            <person name="Fang F."/>
            <person name="Fu Y."/>
            <person name="Hu P."/>
            <person name="Hua A."/>
            <person name="Kenton S."/>
            <person name="Lai H."/>
            <person name="Lao H.I."/>
            <person name="Lewis J."/>
            <person name="Lewis S."/>
            <person name="Lin S.-P."/>
            <person name="Loh P."/>
            <person name="Malaj E."/>
            <person name="Nguyen T."/>
            <person name="Pan H."/>
            <person name="Phan S."/>
            <person name="Qi S."/>
            <person name="Qian Y."/>
            <person name="Ray L."/>
            <person name="Ren Q."/>
            <person name="Shaull S."/>
            <person name="Sloan D."/>
            <person name="Song L."/>
            <person name="Wang Q."/>
            <person name="Wang Y."/>
            <person name="Wang Z."/>
            <person name="White J."/>
            <person name="Willingham D."/>
            <person name="Wu H."/>
            <person name="Yao Z."/>
            <person name="Zhan M."/>
            <person name="Zhang G."/>
            <person name="Chissoe S."/>
            <person name="Murray J."/>
            <person name="Miller N."/>
            <person name="Minx P."/>
            <person name="Fulton R."/>
            <person name="Johnson D."/>
            <person name="Bemis G."/>
            <person name="Bentley D."/>
            <person name="Bradshaw H."/>
            <person name="Bourne S."/>
            <person name="Cordes M."/>
            <person name="Du Z."/>
            <person name="Fulton L."/>
            <person name="Goela D."/>
            <person name="Graves T."/>
            <person name="Hawkins J."/>
            <person name="Hinds K."/>
            <person name="Kemp K."/>
            <person name="Latreille P."/>
            <person name="Layman D."/>
            <person name="Ozersky P."/>
            <person name="Rohlfing T."/>
            <person name="Scheet P."/>
            <person name="Walker C."/>
            <person name="Wamsley A."/>
            <person name="Wohldmann P."/>
            <person name="Pepin K."/>
            <person name="Nelson J."/>
            <person name="Korf I."/>
            <person name="Bedell J.A."/>
            <person name="Hillier L.W."/>
            <person name="Mardis E."/>
            <person name="Waterston R."/>
            <person name="Wilson R."/>
            <person name="Emanuel B.S."/>
            <person name="Shaikh T."/>
            <person name="Kurahashi H."/>
            <person name="Saitta S."/>
            <person name="Budarf M.L."/>
            <person name="McDermid H.E."/>
            <person name="Johnson A."/>
            <person name="Wong A.C.C."/>
            <person name="Morrow B.E."/>
            <person name="Edelmann L."/>
            <person name="Kim U.J."/>
            <person name="Shizuya H."/>
            <person name="Simon M.I."/>
            <person name="Dumanski J.P."/>
            <person name="Peyrard M."/>
            <person name="Kedra D."/>
            <person name="Seroussi E."/>
            <person name="Fransson I."/>
            <person name="Tapia I."/>
            <person name="Bruder C.E."/>
            <person name="O'Brien K.P."/>
            <person name="Wilkinson P."/>
            <person name="Bodenteich A."/>
            <person name="Hartman K."/>
            <person name="Hu X."/>
            <person name="Khan A.S."/>
            <person name="Lane L."/>
            <person name="Tilahun Y."/>
            <person name="Wright H."/>
        </authorList>
    </citation>
    <scope>NUCLEOTIDE SEQUENCE [LARGE SCALE GENOMIC DNA]</scope>
</reference>
<reference key="8">
    <citation type="submission" date="2005-09" db="EMBL/GenBank/DDBJ databases">
        <authorList>
            <person name="Mural R.J."/>
            <person name="Istrail S."/>
            <person name="Sutton G.G."/>
            <person name="Florea L."/>
            <person name="Halpern A.L."/>
            <person name="Mobarry C.M."/>
            <person name="Lippert R."/>
            <person name="Walenz B."/>
            <person name="Shatkay H."/>
            <person name="Dew I."/>
            <person name="Miller J.R."/>
            <person name="Flanigan M.J."/>
            <person name="Edwards N.J."/>
            <person name="Bolanos R."/>
            <person name="Fasulo D."/>
            <person name="Halldorsson B.V."/>
            <person name="Hannenhalli S."/>
            <person name="Turner R."/>
            <person name="Yooseph S."/>
            <person name="Lu F."/>
            <person name="Nusskern D.R."/>
            <person name="Shue B.C."/>
            <person name="Zheng X.H."/>
            <person name="Zhong F."/>
            <person name="Delcher A.L."/>
            <person name="Huson D.H."/>
            <person name="Kravitz S.A."/>
            <person name="Mouchard L."/>
            <person name="Reinert K."/>
            <person name="Remington K.A."/>
            <person name="Clark A.G."/>
            <person name="Waterman M.S."/>
            <person name="Eichler E.E."/>
            <person name="Adams M.D."/>
            <person name="Hunkapiller M.W."/>
            <person name="Myers E.W."/>
            <person name="Venter J.C."/>
        </authorList>
    </citation>
    <scope>NUCLEOTIDE SEQUENCE [LARGE SCALE GENOMIC DNA]</scope>
</reference>
<reference key="9">
    <citation type="journal article" date="2004" name="Genome Res.">
        <title>The status, quality, and expansion of the NIH full-length cDNA project: the Mammalian Gene Collection (MGC).</title>
        <authorList>
            <consortium name="The MGC Project Team"/>
        </authorList>
    </citation>
    <scope>NUCLEOTIDE SEQUENCE [LARGE SCALE MRNA] (ISOFORM 1)</scope>
    <source>
        <tissue>Pancreas</tissue>
        <tissue>Spleen</tissue>
    </source>
</reference>